<proteinExistence type="inferred from homology"/>
<keyword id="KW-0687">Ribonucleoprotein</keyword>
<keyword id="KW-0689">Ribosomal protein</keyword>
<keyword id="KW-0694">RNA-binding</keyword>
<keyword id="KW-0699">rRNA-binding</keyword>
<keyword id="KW-0820">tRNA-binding</keyword>
<protein>
    <recommendedName>
        <fullName evidence="1">Large ribosomal subunit protein uL16</fullName>
    </recommendedName>
    <alternativeName>
        <fullName evidence="2">50S ribosomal protein L16</fullName>
    </alternativeName>
</protein>
<evidence type="ECO:0000255" key="1">
    <source>
        <dbReference type="HAMAP-Rule" id="MF_01342"/>
    </source>
</evidence>
<evidence type="ECO:0000305" key="2"/>
<sequence>MLQPKRTKFRKMHKGRNRGLAAGADVSFGSFGLKAVGRGRLTARQIEAARRAMTRAVKRQGKIWIRVFPDKPITEKPLAVRMGKGKGNVEYWVALIQPGKVLYEMDGVPEELAREAFKLAAAKLPIKTTFVTKTVM</sequence>
<feature type="chain" id="PRO_1000143026" description="Large ribosomal subunit protein uL16">
    <location>
        <begin position="1"/>
        <end position="136"/>
    </location>
</feature>
<dbReference type="EMBL" id="FM200053">
    <property type="protein sequence ID" value="CAR61329.1"/>
    <property type="molecule type" value="Genomic_DNA"/>
</dbReference>
<dbReference type="RefSeq" id="WP_000941208.1">
    <property type="nucleotide sequence ID" value="NC_011147.1"/>
</dbReference>
<dbReference type="SMR" id="B5BGX9"/>
<dbReference type="GeneID" id="93035738"/>
<dbReference type="KEGG" id="sek:SSPA3078"/>
<dbReference type="HOGENOM" id="CLU_078858_2_1_6"/>
<dbReference type="Proteomes" id="UP000001869">
    <property type="component" value="Chromosome"/>
</dbReference>
<dbReference type="GO" id="GO:0022625">
    <property type="term" value="C:cytosolic large ribosomal subunit"/>
    <property type="evidence" value="ECO:0007669"/>
    <property type="project" value="TreeGrafter"/>
</dbReference>
<dbReference type="GO" id="GO:0019843">
    <property type="term" value="F:rRNA binding"/>
    <property type="evidence" value="ECO:0007669"/>
    <property type="project" value="UniProtKB-UniRule"/>
</dbReference>
<dbReference type="GO" id="GO:0003735">
    <property type="term" value="F:structural constituent of ribosome"/>
    <property type="evidence" value="ECO:0007669"/>
    <property type="project" value="InterPro"/>
</dbReference>
<dbReference type="GO" id="GO:0000049">
    <property type="term" value="F:tRNA binding"/>
    <property type="evidence" value="ECO:0007669"/>
    <property type="project" value="UniProtKB-KW"/>
</dbReference>
<dbReference type="GO" id="GO:0006412">
    <property type="term" value="P:translation"/>
    <property type="evidence" value="ECO:0007669"/>
    <property type="project" value="UniProtKB-UniRule"/>
</dbReference>
<dbReference type="CDD" id="cd01433">
    <property type="entry name" value="Ribosomal_L16_L10e"/>
    <property type="match status" value="1"/>
</dbReference>
<dbReference type="FunFam" id="3.90.1170.10:FF:000001">
    <property type="entry name" value="50S ribosomal protein L16"/>
    <property type="match status" value="1"/>
</dbReference>
<dbReference type="Gene3D" id="3.90.1170.10">
    <property type="entry name" value="Ribosomal protein L10e/L16"/>
    <property type="match status" value="1"/>
</dbReference>
<dbReference type="HAMAP" id="MF_01342">
    <property type="entry name" value="Ribosomal_uL16"/>
    <property type="match status" value="1"/>
</dbReference>
<dbReference type="InterPro" id="IPR047873">
    <property type="entry name" value="Ribosomal_uL16"/>
</dbReference>
<dbReference type="InterPro" id="IPR000114">
    <property type="entry name" value="Ribosomal_uL16_bact-type"/>
</dbReference>
<dbReference type="InterPro" id="IPR020798">
    <property type="entry name" value="Ribosomal_uL16_CS"/>
</dbReference>
<dbReference type="InterPro" id="IPR016180">
    <property type="entry name" value="Ribosomal_uL16_dom"/>
</dbReference>
<dbReference type="InterPro" id="IPR036920">
    <property type="entry name" value="Ribosomal_uL16_sf"/>
</dbReference>
<dbReference type="NCBIfam" id="TIGR01164">
    <property type="entry name" value="rplP_bact"/>
    <property type="match status" value="1"/>
</dbReference>
<dbReference type="PANTHER" id="PTHR12220">
    <property type="entry name" value="50S/60S RIBOSOMAL PROTEIN L16"/>
    <property type="match status" value="1"/>
</dbReference>
<dbReference type="PANTHER" id="PTHR12220:SF13">
    <property type="entry name" value="LARGE RIBOSOMAL SUBUNIT PROTEIN UL16M"/>
    <property type="match status" value="1"/>
</dbReference>
<dbReference type="Pfam" id="PF00252">
    <property type="entry name" value="Ribosomal_L16"/>
    <property type="match status" value="1"/>
</dbReference>
<dbReference type="PRINTS" id="PR00060">
    <property type="entry name" value="RIBOSOMALL16"/>
</dbReference>
<dbReference type="SUPFAM" id="SSF54686">
    <property type="entry name" value="Ribosomal protein L16p/L10e"/>
    <property type="match status" value="1"/>
</dbReference>
<dbReference type="PROSITE" id="PS00586">
    <property type="entry name" value="RIBOSOMAL_L16_1"/>
    <property type="match status" value="1"/>
</dbReference>
<dbReference type="PROSITE" id="PS00701">
    <property type="entry name" value="RIBOSOMAL_L16_2"/>
    <property type="match status" value="1"/>
</dbReference>
<gene>
    <name evidence="1" type="primary">rplP</name>
    <name type="ordered locus">SSPA3078</name>
</gene>
<comment type="function">
    <text evidence="1">Binds 23S rRNA and is also seen to make contacts with the A and possibly P site tRNAs.</text>
</comment>
<comment type="subunit">
    <text evidence="1">Part of the 50S ribosomal subunit.</text>
</comment>
<comment type="similarity">
    <text evidence="1">Belongs to the universal ribosomal protein uL16 family.</text>
</comment>
<accession>B5BGX9</accession>
<reference key="1">
    <citation type="journal article" date="2009" name="BMC Genomics">
        <title>Pseudogene accumulation in the evolutionary histories of Salmonella enterica serovars Paratyphi A and Typhi.</title>
        <authorList>
            <person name="Holt K.E."/>
            <person name="Thomson N.R."/>
            <person name="Wain J."/>
            <person name="Langridge G.C."/>
            <person name="Hasan R."/>
            <person name="Bhutta Z.A."/>
            <person name="Quail M.A."/>
            <person name="Norbertczak H."/>
            <person name="Walker D."/>
            <person name="Simmonds M."/>
            <person name="White B."/>
            <person name="Bason N."/>
            <person name="Mungall K."/>
            <person name="Dougan G."/>
            <person name="Parkhill J."/>
        </authorList>
    </citation>
    <scope>NUCLEOTIDE SEQUENCE [LARGE SCALE GENOMIC DNA]</scope>
    <source>
        <strain>AKU_12601</strain>
    </source>
</reference>
<name>RL16_SALPK</name>
<organism>
    <name type="scientific">Salmonella paratyphi A (strain AKU_12601)</name>
    <dbReference type="NCBI Taxonomy" id="554290"/>
    <lineage>
        <taxon>Bacteria</taxon>
        <taxon>Pseudomonadati</taxon>
        <taxon>Pseudomonadota</taxon>
        <taxon>Gammaproteobacteria</taxon>
        <taxon>Enterobacterales</taxon>
        <taxon>Enterobacteriaceae</taxon>
        <taxon>Salmonella</taxon>
    </lineage>
</organism>